<organism>
    <name type="scientific">Pyrobaculum islandicum (strain DSM 4184 / JCM 9189 / GEO3)</name>
    <dbReference type="NCBI Taxonomy" id="384616"/>
    <lineage>
        <taxon>Archaea</taxon>
        <taxon>Thermoproteota</taxon>
        <taxon>Thermoprotei</taxon>
        <taxon>Thermoproteales</taxon>
        <taxon>Thermoproteaceae</taxon>
        <taxon>Pyrobaculum</taxon>
    </lineage>
</organism>
<sequence>MAQIPPSLQDLVNRFNQVQAQLQNVLLRKQQYEAELREIEKALTEIEKLPQDAKIYKSVGNFLIPQNRDAALQELRERKELLELHTKTLARQESLLREQIEKLREEINKELSRLKGSVETAKGGG</sequence>
<protein>
    <recommendedName>
        <fullName evidence="1">Prefoldin subunit beta</fullName>
    </recommendedName>
    <alternativeName>
        <fullName evidence="1">GimC subunit beta</fullName>
    </alternativeName>
</protein>
<gene>
    <name evidence="1" type="primary">pfdB</name>
    <name type="ordered locus">Pisl_0831</name>
</gene>
<dbReference type="EMBL" id="CP000504">
    <property type="protein sequence ID" value="ABL88007.1"/>
    <property type="molecule type" value="Genomic_DNA"/>
</dbReference>
<dbReference type="RefSeq" id="WP_011762583.1">
    <property type="nucleotide sequence ID" value="NC_008701.1"/>
</dbReference>
<dbReference type="SMR" id="A1RSS5"/>
<dbReference type="STRING" id="384616.Pisl_0831"/>
<dbReference type="GeneID" id="4616613"/>
<dbReference type="KEGG" id="pis:Pisl_0831"/>
<dbReference type="eggNOG" id="arCOG01342">
    <property type="taxonomic scope" value="Archaea"/>
</dbReference>
<dbReference type="HOGENOM" id="CLU_131909_2_1_2"/>
<dbReference type="OrthoDB" id="27242at2157"/>
<dbReference type="Proteomes" id="UP000002595">
    <property type="component" value="Chromosome"/>
</dbReference>
<dbReference type="GO" id="GO:0005737">
    <property type="term" value="C:cytoplasm"/>
    <property type="evidence" value="ECO:0007669"/>
    <property type="project" value="UniProtKB-SubCell"/>
</dbReference>
<dbReference type="GO" id="GO:0016272">
    <property type="term" value="C:prefoldin complex"/>
    <property type="evidence" value="ECO:0007669"/>
    <property type="project" value="UniProtKB-UniRule"/>
</dbReference>
<dbReference type="GO" id="GO:0051087">
    <property type="term" value="F:protein-folding chaperone binding"/>
    <property type="evidence" value="ECO:0007669"/>
    <property type="project" value="TreeGrafter"/>
</dbReference>
<dbReference type="GO" id="GO:0051082">
    <property type="term" value="F:unfolded protein binding"/>
    <property type="evidence" value="ECO:0007669"/>
    <property type="project" value="UniProtKB-UniRule"/>
</dbReference>
<dbReference type="GO" id="GO:0051131">
    <property type="term" value="P:chaperone-mediated protein complex assembly"/>
    <property type="evidence" value="ECO:0007669"/>
    <property type="project" value="TreeGrafter"/>
</dbReference>
<dbReference type="GO" id="GO:0006457">
    <property type="term" value="P:protein folding"/>
    <property type="evidence" value="ECO:0007669"/>
    <property type="project" value="UniProtKB-UniRule"/>
</dbReference>
<dbReference type="CDD" id="cd23162">
    <property type="entry name" value="Prefoldin_beta_GimC"/>
    <property type="match status" value="1"/>
</dbReference>
<dbReference type="FunFam" id="1.10.287.370:FF:000013">
    <property type="entry name" value="Prefoldin subunit beta"/>
    <property type="match status" value="1"/>
</dbReference>
<dbReference type="Gene3D" id="1.10.287.370">
    <property type="match status" value="1"/>
</dbReference>
<dbReference type="HAMAP" id="MF_00307">
    <property type="entry name" value="PfdB"/>
    <property type="match status" value="1"/>
</dbReference>
<dbReference type="InterPro" id="IPR002777">
    <property type="entry name" value="PFD_beta-like"/>
</dbReference>
<dbReference type="InterPro" id="IPR012713">
    <property type="entry name" value="PfdB"/>
</dbReference>
<dbReference type="InterPro" id="IPR009053">
    <property type="entry name" value="Prefoldin"/>
</dbReference>
<dbReference type="NCBIfam" id="TIGR02338">
    <property type="entry name" value="gimC_beta"/>
    <property type="match status" value="1"/>
</dbReference>
<dbReference type="PANTHER" id="PTHR21431">
    <property type="entry name" value="PREFOLDIN SUBUNIT 6"/>
    <property type="match status" value="1"/>
</dbReference>
<dbReference type="PANTHER" id="PTHR21431:SF0">
    <property type="entry name" value="PREFOLDIN SUBUNIT 6"/>
    <property type="match status" value="1"/>
</dbReference>
<dbReference type="Pfam" id="PF01920">
    <property type="entry name" value="Prefoldin_2"/>
    <property type="match status" value="1"/>
</dbReference>
<dbReference type="SUPFAM" id="SSF46579">
    <property type="entry name" value="Prefoldin"/>
    <property type="match status" value="1"/>
</dbReference>
<feature type="chain" id="PRO_0000300778" description="Prefoldin subunit beta">
    <location>
        <begin position="1"/>
        <end position="125"/>
    </location>
</feature>
<evidence type="ECO:0000255" key="1">
    <source>
        <dbReference type="HAMAP-Rule" id="MF_00307"/>
    </source>
</evidence>
<comment type="function">
    <text evidence="1">Molecular chaperone capable of stabilizing a range of proteins. Seems to fulfill an ATP-independent, HSP70-like function in archaeal de novo protein folding.</text>
</comment>
<comment type="subunit">
    <text evidence="1">Heterohexamer of two alpha and four beta subunits.</text>
</comment>
<comment type="subcellular location">
    <subcellularLocation>
        <location evidence="1">Cytoplasm</location>
    </subcellularLocation>
</comment>
<comment type="similarity">
    <text evidence="1">Belongs to the prefoldin subunit beta family.</text>
</comment>
<accession>A1RSS5</accession>
<keyword id="KW-0143">Chaperone</keyword>
<keyword id="KW-0963">Cytoplasm</keyword>
<proteinExistence type="inferred from homology"/>
<reference key="1">
    <citation type="submission" date="2006-12" db="EMBL/GenBank/DDBJ databases">
        <title>Complete sequence of Pyrobaculum islandicum DSM 4184.</title>
        <authorList>
            <person name="Copeland A."/>
            <person name="Lucas S."/>
            <person name="Lapidus A."/>
            <person name="Barry K."/>
            <person name="Detter J.C."/>
            <person name="Glavina del Rio T."/>
            <person name="Dalin E."/>
            <person name="Tice H."/>
            <person name="Pitluck S."/>
            <person name="Meincke L."/>
            <person name="Brettin T."/>
            <person name="Bruce D."/>
            <person name="Han C."/>
            <person name="Tapia R."/>
            <person name="Gilna P."/>
            <person name="Schmutz J."/>
            <person name="Larimer F."/>
            <person name="Land M."/>
            <person name="Hauser L."/>
            <person name="Kyrpides N."/>
            <person name="Mikhailova N."/>
            <person name="Cozen A.E."/>
            <person name="Fitz-Gibbon S.T."/>
            <person name="House C.H."/>
            <person name="Saltikov C."/>
            <person name="Lowe T."/>
            <person name="Richardson P."/>
        </authorList>
    </citation>
    <scope>NUCLEOTIDE SEQUENCE [LARGE SCALE GENOMIC DNA]</scope>
    <source>
        <strain>DSM 4184 / JCM 9189 / GEO3</strain>
    </source>
</reference>
<name>PFDB_PYRIL</name>